<accession>C3LMC8</accession>
<sequence>MTAQTQELTKAQQYNFNKLQKRIRRNTGQAIADFNMIEDGDRIMVCLSGGKDSFTMLDILMSLQKSAPISFELVAVNLDQKQPGFPEHVLPEYLESLGVEYKIVEEDTYAIVQDKVPEGKTTCALCSRLRRGILYRTAKELGATKIALGHHRDDILETLFLNMFYGGKMKGMPPKLVSDNGEHVVIRPLAYCREKDIIKYSDMRGYPIIPCNLCGSQPNLQRQAVKQMLNDWDKRFPGRIETMFRAMQNVVPSHLADFSLFDFKSIDKNSGVINGGDIGFDKEEIAPQVVEDEDLVMEFDPSLQLNVTNI</sequence>
<gene>
    <name evidence="1" type="primary">ttcA</name>
    <name type="ordered locus">VCM66_1388</name>
</gene>
<proteinExistence type="inferred from homology"/>
<organism>
    <name type="scientific">Vibrio cholerae serotype O1 (strain M66-2)</name>
    <dbReference type="NCBI Taxonomy" id="579112"/>
    <lineage>
        <taxon>Bacteria</taxon>
        <taxon>Pseudomonadati</taxon>
        <taxon>Pseudomonadota</taxon>
        <taxon>Gammaproteobacteria</taxon>
        <taxon>Vibrionales</taxon>
        <taxon>Vibrionaceae</taxon>
        <taxon>Vibrio</taxon>
    </lineage>
</organism>
<name>TTCA_VIBCM</name>
<feature type="chain" id="PRO_1000188663" description="tRNA-cytidine(32) 2-sulfurtransferase">
    <location>
        <begin position="1"/>
        <end position="310"/>
    </location>
</feature>
<feature type="short sequence motif" description="PP-loop motif" evidence="1">
    <location>
        <begin position="48"/>
        <end position="53"/>
    </location>
</feature>
<feature type="binding site" evidence="1">
    <location>
        <position position="123"/>
    </location>
    <ligand>
        <name>[4Fe-4S] cluster</name>
        <dbReference type="ChEBI" id="CHEBI:49883"/>
    </ligand>
</feature>
<feature type="binding site" evidence="1">
    <location>
        <position position="126"/>
    </location>
    <ligand>
        <name>[4Fe-4S] cluster</name>
        <dbReference type="ChEBI" id="CHEBI:49883"/>
    </ligand>
</feature>
<feature type="binding site" evidence="1">
    <location>
        <position position="214"/>
    </location>
    <ligand>
        <name>[4Fe-4S] cluster</name>
        <dbReference type="ChEBI" id="CHEBI:49883"/>
    </ligand>
</feature>
<protein>
    <recommendedName>
        <fullName evidence="1">tRNA-cytidine(32) 2-sulfurtransferase</fullName>
        <ecNumber evidence="1">2.8.1.-</ecNumber>
    </recommendedName>
    <alternativeName>
        <fullName evidence="1">Two-thiocytidine biosynthesis protein A</fullName>
    </alternativeName>
    <alternativeName>
        <fullName evidence="1">tRNA 2-thiocytidine biosynthesis protein TtcA</fullName>
    </alternativeName>
</protein>
<dbReference type="EC" id="2.8.1.-" evidence="1"/>
<dbReference type="EMBL" id="CP001233">
    <property type="protein sequence ID" value="ACP05704.1"/>
    <property type="molecule type" value="Genomic_DNA"/>
</dbReference>
<dbReference type="RefSeq" id="WP_000126823.1">
    <property type="nucleotide sequence ID" value="NC_012578.1"/>
</dbReference>
<dbReference type="SMR" id="C3LMC8"/>
<dbReference type="KEGG" id="vcm:VCM66_1388"/>
<dbReference type="HOGENOM" id="CLU_026481_0_0_6"/>
<dbReference type="Proteomes" id="UP000001217">
    <property type="component" value="Chromosome I"/>
</dbReference>
<dbReference type="GO" id="GO:0005737">
    <property type="term" value="C:cytoplasm"/>
    <property type="evidence" value="ECO:0007669"/>
    <property type="project" value="UniProtKB-SubCell"/>
</dbReference>
<dbReference type="GO" id="GO:0051539">
    <property type="term" value="F:4 iron, 4 sulfur cluster binding"/>
    <property type="evidence" value="ECO:0007669"/>
    <property type="project" value="UniProtKB-UniRule"/>
</dbReference>
<dbReference type="GO" id="GO:0005524">
    <property type="term" value="F:ATP binding"/>
    <property type="evidence" value="ECO:0007669"/>
    <property type="project" value="UniProtKB-UniRule"/>
</dbReference>
<dbReference type="GO" id="GO:0000287">
    <property type="term" value="F:magnesium ion binding"/>
    <property type="evidence" value="ECO:0007669"/>
    <property type="project" value="UniProtKB-UniRule"/>
</dbReference>
<dbReference type="GO" id="GO:0016783">
    <property type="term" value="F:sulfurtransferase activity"/>
    <property type="evidence" value="ECO:0007669"/>
    <property type="project" value="UniProtKB-UniRule"/>
</dbReference>
<dbReference type="GO" id="GO:0000049">
    <property type="term" value="F:tRNA binding"/>
    <property type="evidence" value="ECO:0007669"/>
    <property type="project" value="UniProtKB-KW"/>
</dbReference>
<dbReference type="GO" id="GO:0034227">
    <property type="term" value="P:tRNA thio-modification"/>
    <property type="evidence" value="ECO:0007669"/>
    <property type="project" value="UniProtKB-UniRule"/>
</dbReference>
<dbReference type="CDD" id="cd24138">
    <property type="entry name" value="TtcA-like"/>
    <property type="match status" value="1"/>
</dbReference>
<dbReference type="Gene3D" id="3.40.50.620">
    <property type="entry name" value="HUPs"/>
    <property type="match status" value="1"/>
</dbReference>
<dbReference type="HAMAP" id="MF_01850">
    <property type="entry name" value="TtcA"/>
    <property type="match status" value="1"/>
</dbReference>
<dbReference type="InterPro" id="IPR014729">
    <property type="entry name" value="Rossmann-like_a/b/a_fold"/>
</dbReference>
<dbReference type="InterPro" id="IPR011063">
    <property type="entry name" value="TilS/TtcA_N"/>
</dbReference>
<dbReference type="InterPro" id="IPR012089">
    <property type="entry name" value="tRNA_Cyd_32_2_STrfase"/>
</dbReference>
<dbReference type="InterPro" id="IPR035107">
    <property type="entry name" value="tRNA_thiolation_TtcA_Ctu1"/>
</dbReference>
<dbReference type="NCBIfam" id="NF007972">
    <property type="entry name" value="PRK10696.1"/>
    <property type="match status" value="1"/>
</dbReference>
<dbReference type="PANTHER" id="PTHR43686:SF1">
    <property type="entry name" value="AMINOTRAN_5 DOMAIN-CONTAINING PROTEIN"/>
    <property type="match status" value="1"/>
</dbReference>
<dbReference type="PANTHER" id="PTHR43686">
    <property type="entry name" value="SULFURTRANSFERASE-RELATED"/>
    <property type="match status" value="1"/>
</dbReference>
<dbReference type="Pfam" id="PF01171">
    <property type="entry name" value="ATP_bind_3"/>
    <property type="match status" value="1"/>
</dbReference>
<dbReference type="PIRSF" id="PIRSF004976">
    <property type="entry name" value="ATPase_YdaO"/>
    <property type="match status" value="1"/>
</dbReference>
<dbReference type="SUPFAM" id="SSF52402">
    <property type="entry name" value="Adenine nucleotide alpha hydrolases-like"/>
    <property type="match status" value="1"/>
</dbReference>
<comment type="function">
    <text evidence="1">Catalyzes the ATP-dependent 2-thiolation of cytidine in position 32 of tRNA, to form 2-thiocytidine (s(2)C32). The sulfur atoms are provided by the cysteine/cysteine desulfurase (IscS) system.</text>
</comment>
<comment type="catalytic activity">
    <reaction evidence="1">
        <text>cytidine(32) in tRNA + S-sulfanyl-L-cysteinyl-[cysteine desulfurase] + AH2 + ATP = 2-thiocytidine(32) in tRNA + L-cysteinyl-[cysteine desulfurase] + A + AMP + diphosphate + H(+)</text>
        <dbReference type="Rhea" id="RHEA:57048"/>
        <dbReference type="Rhea" id="RHEA-COMP:10288"/>
        <dbReference type="Rhea" id="RHEA-COMP:12157"/>
        <dbReference type="Rhea" id="RHEA-COMP:12158"/>
        <dbReference type="Rhea" id="RHEA-COMP:14821"/>
        <dbReference type="ChEBI" id="CHEBI:13193"/>
        <dbReference type="ChEBI" id="CHEBI:15378"/>
        <dbReference type="ChEBI" id="CHEBI:17499"/>
        <dbReference type="ChEBI" id="CHEBI:29950"/>
        <dbReference type="ChEBI" id="CHEBI:30616"/>
        <dbReference type="ChEBI" id="CHEBI:33019"/>
        <dbReference type="ChEBI" id="CHEBI:61963"/>
        <dbReference type="ChEBI" id="CHEBI:82748"/>
        <dbReference type="ChEBI" id="CHEBI:141453"/>
        <dbReference type="ChEBI" id="CHEBI:456215"/>
    </reaction>
    <physiologicalReaction direction="left-to-right" evidence="1">
        <dbReference type="Rhea" id="RHEA:57049"/>
    </physiologicalReaction>
</comment>
<comment type="cofactor">
    <cofactor evidence="1">
        <name>Mg(2+)</name>
        <dbReference type="ChEBI" id="CHEBI:18420"/>
    </cofactor>
</comment>
<comment type="cofactor">
    <cofactor evidence="1">
        <name>[4Fe-4S] cluster</name>
        <dbReference type="ChEBI" id="CHEBI:49883"/>
    </cofactor>
    <text evidence="1">Binds 1 [4Fe-4S] cluster per subunit. The cluster is chelated by three Cys residues, the fourth Fe has a free coordination site that may bind a sulfur atom transferred from the persulfide of IscS.</text>
</comment>
<comment type="pathway">
    <text evidence="1">tRNA modification.</text>
</comment>
<comment type="subunit">
    <text evidence="1">Homodimer.</text>
</comment>
<comment type="subcellular location">
    <subcellularLocation>
        <location evidence="1">Cytoplasm</location>
    </subcellularLocation>
</comment>
<comment type="miscellaneous">
    <text evidence="1">The thiolation reaction likely consists of two steps: a first activation step by ATP to form an adenylated intermediate of the target base of tRNA, and a second nucleophilic substitution step of the sulfur (S) atom supplied by the hydrosulfide attached to the Fe-S cluster.</text>
</comment>
<comment type="similarity">
    <text evidence="1">Belongs to the TtcA family.</text>
</comment>
<keyword id="KW-0004">4Fe-4S</keyword>
<keyword id="KW-0067">ATP-binding</keyword>
<keyword id="KW-0963">Cytoplasm</keyword>
<keyword id="KW-0408">Iron</keyword>
<keyword id="KW-0411">Iron-sulfur</keyword>
<keyword id="KW-0460">Magnesium</keyword>
<keyword id="KW-0479">Metal-binding</keyword>
<keyword id="KW-0547">Nucleotide-binding</keyword>
<keyword id="KW-0694">RNA-binding</keyword>
<keyword id="KW-0808">Transferase</keyword>
<keyword id="KW-0819">tRNA processing</keyword>
<keyword id="KW-0820">tRNA-binding</keyword>
<evidence type="ECO:0000255" key="1">
    <source>
        <dbReference type="HAMAP-Rule" id="MF_01850"/>
    </source>
</evidence>
<reference key="1">
    <citation type="journal article" date="2008" name="PLoS ONE">
        <title>A recalibrated molecular clock and independent origins for the cholera pandemic clones.</title>
        <authorList>
            <person name="Feng L."/>
            <person name="Reeves P.R."/>
            <person name="Lan R."/>
            <person name="Ren Y."/>
            <person name="Gao C."/>
            <person name="Zhou Z."/>
            <person name="Ren Y."/>
            <person name="Cheng J."/>
            <person name="Wang W."/>
            <person name="Wang J."/>
            <person name="Qian W."/>
            <person name="Li D."/>
            <person name="Wang L."/>
        </authorList>
    </citation>
    <scope>NUCLEOTIDE SEQUENCE [LARGE SCALE GENOMIC DNA]</scope>
    <source>
        <strain>M66-2</strain>
    </source>
</reference>